<name>CAIC_SALTI</name>
<keyword id="KW-0436">Ligase</keyword>
<protein>
    <recommendedName>
        <fullName evidence="1">Crotonobetaine/carnitine--CoA ligase</fullName>
        <ecNumber evidence="1">6.2.1.48</ecNumber>
    </recommendedName>
</protein>
<dbReference type="EC" id="6.2.1.48" evidence="1"/>
<dbReference type="EMBL" id="AL513382">
    <property type="protein sequence ID" value="CAD01225.1"/>
    <property type="molecule type" value="Genomic_DNA"/>
</dbReference>
<dbReference type="EMBL" id="AE014613">
    <property type="protein sequence ID" value="AAO67805.1"/>
    <property type="molecule type" value="Genomic_DNA"/>
</dbReference>
<dbReference type="RefSeq" id="NP_454681.1">
    <property type="nucleotide sequence ID" value="NC_003198.1"/>
</dbReference>
<dbReference type="RefSeq" id="WP_000355790.1">
    <property type="nucleotide sequence ID" value="NZ_WSUR01000028.1"/>
</dbReference>
<dbReference type="SMR" id="Q8Z9L4"/>
<dbReference type="STRING" id="220341.gene:17584127"/>
<dbReference type="KEGG" id="stt:t0072"/>
<dbReference type="KEGG" id="sty:STY0081"/>
<dbReference type="PATRIC" id="fig|220341.7.peg.80"/>
<dbReference type="eggNOG" id="COG0318">
    <property type="taxonomic scope" value="Bacteria"/>
</dbReference>
<dbReference type="HOGENOM" id="CLU_000022_59_0_6"/>
<dbReference type="OMA" id="YIMPKFD"/>
<dbReference type="OrthoDB" id="9803968at2"/>
<dbReference type="UniPathway" id="UPA00117"/>
<dbReference type="Proteomes" id="UP000000541">
    <property type="component" value="Chromosome"/>
</dbReference>
<dbReference type="Proteomes" id="UP000002670">
    <property type="component" value="Chromosome"/>
</dbReference>
<dbReference type="GO" id="GO:0051108">
    <property type="term" value="F:carnitine-CoA ligase activity"/>
    <property type="evidence" value="ECO:0007669"/>
    <property type="project" value="InterPro"/>
</dbReference>
<dbReference type="GO" id="GO:0051109">
    <property type="term" value="F:crotonobetaine-CoA ligase activity"/>
    <property type="evidence" value="ECO:0007669"/>
    <property type="project" value="InterPro"/>
</dbReference>
<dbReference type="GO" id="GO:0031956">
    <property type="term" value="F:medium-chain fatty acid-CoA ligase activity"/>
    <property type="evidence" value="ECO:0007669"/>
    <property type="project" value="TreeGrafter"/>
</dbReference>
<dbReference type="GO" id="GO:0009437">
    <property type="term" value="P:carnitine metabolic process"/>
    <property type="evidence" value="ECO:0007669"/>
    <property type="project" value="UniProtKB-UniRule"/>
</dbReference>
<dbReference type="GO" id="GO:0006631">
    <property type="term" value="P:fatty acid metabolic process"/>
    <property type="evidence" value="ECO:0007669"/>
    <property type="project" value="TreeGrafter"/>
</dbReference>
<dbReference type="CDD" id="cd05934">
    <property type="entry name" value="FACL_DitJ_like"/>
    <property type="match status" value="1"/>
</dbReference>
<dbReference type="FunFam" id="3.30.300.30:FF:000011">
    <property type="entry name" value="Crotonobetaine/carnitine--CoA ligase"/>
    <property type="match status" value="1"/>
</dbReference>
<dbReference type="Gene3D" id="3.30.300.30">
    <property type="match status" value="1"/>
</dbReference>
<dbReference type="Gene3D" id="3.40.50.12780">
    <property type="entry name" value="N-terminal domain of ligase-like"/>
    <property type="match status" value="1"/>
</dbReference>
<dbReference type="HAMAP" id="MF_01524">
    <property type="entry name" value="CaiC"/>
    <property type="match status" value="1"/>
</dbReference>
<dbReference type="InterPro" id="IPR025110">
    <property type="entry name" value="AMP-bd_C"/>
</dbReference>
<dbReference type="InterPro" id="IPR045851">
    <property type="entry name" value="AMP-bd_C_sf"/>
</dbReference>
<dbReference type="InterPro" id="IPR020845">
    <property type="entry name" value="AMP-binding_CS"/>
</dbReference>
<dbReference type="InterPro" id="IPR000873">
    <property type="entry name" value="AMP-dep_synth/lig_dom"/>
</dbReference>
<dbReference type="InterPro" id="IPR042099">
    <property type="entry name" value="ANL_N_sf"/>
</dbReference>
<dbReference type="InterPro" id="IPR023456">
    <property type="entry name" value="CaiC"/>
</dbReference>
<dbReference type="NCBIfam" id="NF005947">
    <property type="entry name" value="PRK08008.1"/>
    <property type="match status" value="1"/>
</dbReference>
<dbReference type="PANTHER" id="PTHR43201">
    <property type="entry name" value="ACYL-COA SYNTHETASE"/>
    <property type="match status" value="1"/>
</dbReference>
<dbReference type="PANTHER" id="PTHR43201:SF5">
    <property type="entry name" value="MEDIUM-CHAIN ACYL-COA LIGASE ACSF2, MITOCHONDRIAL"/>
    <property type="match status" value="1"/>
</dbReference>
<dbReference type="Pfam" id="PF00501">
    <property type="entry name" value="AMP-binding"/>
    <property type="match status" value="1"/>
</dbReference>
<dbReference type="Pfam" id="PF13193">
    <property type="entry name" value="AMP-binding_C"/>
    <property type="match status" value="1"/>
</dbReference>
<dbReference type="SUPFAM" id="SSF56801">
    <property type="entry name" value="Acetyl-CoA synthetase-like"/>
    <property type="match status" value="1"/>
</dbReference>
<dbReference type="PROSITE" id="PS00455">
    <property type="entry name" value="AMP_BINDING"/>
    <property type="match status" value="1"/>
</dbReference>
<organism>
    <name type="scientific">Salmonella typhi</name>
    <dbReference type="NCBI Taxonomy" id="90370"/>
    <lineage>
        <taxon>Bacteria</taxon>
        <taxon>Pseudomonadati</taxon>
        <taxon>Pseudomonadota</taxon>
        <taxon>Gammaproteobacteria</taxon>
        <taxon>Enterobacterales</taxon>
        <taxon>Enterobacteriaceae</taxon>
        <taxon>Salmonella</taxon>
    </lineage>
</organism>
<gene>
    <name evidence="1" type="primary">caiC</name>
    <name type="ordered locus">STY0081</name>
    <name type="ordered locus">t0072</name>
</gene>
<reference key="1">
    <citation type="journal article" date="2001" name="Nature">
        <title>Complete genome sequence of a multiple drug resistant Salmonella enterica serovar Typhi CT18.</title>
        <authorList>
            <person name="Parkhill J."/>
            <person name="Dougan G."/>
            <person name="James K.D."/>
            <person name="Thomson N.R."/>
            <person name="Pickard D."/>
            <person name="Wain J."/>
            <person name="Churcher C.M."/>
            <person name="Mungall K.L."/>
            <person name="Bentley S.D."/>
            <person name="Holden M.T.G."/>
            <person name="Sebaihia M."/>
            <person name="Baker S."/>
            <person name="Basham D."/>
            <person name="Brooks K."/>
            <person name="Chillingworth T."/>
            <person name="Connerton P."/>
            <person name="Cronin A."/>
            <person name="Davis P."/>
            <person name="Davies R.M."/>
            <person name="Dowd L."/>
            <person name="White N."/>
            <person name="Farrar J."/>
            <person name="Feltwell T."/>
            <person name="Hamlin N."/>
            <person name="Haque A."/>
            <person name="Hien T.T."/>
            <person name="Holroyd S."/>
            <person name="Jagels K."/>
            <person name="Krogh A."/>
            <person name="Larsen T.S."/>
            <person name="Leather S."/>
            <person name="Moule S."/>
            <person name="O'Gaora P."/>
            <person name="Parry C."/>
            <person name="Quail M.A."/>
            <person name="Rutherford K.M."/>
            <person name="Simmonds M."/>
            <person name="Skelton J."/>
            <person name="Stevens K."/>
            <person name="Whitehead S."/>
            <person name="Barrell B.G."/>
        </authorList>
    </citation>
    <scope>NUCLEOTIDE SEQUENCE [LARGE SCALE GENOMIC DNA]</scope>
    <source>
        <strain>CT18</strain>
    </source>
</reference>
<reference key="2">
    <citation type="journal article" date="2003" name="J. Bacteriol.">
        <title>Comparative genomics of Salmonella enterica serovar Typhi strains Ty2 and CT18.</title>
        <authorList>
            <person name="Deng W."/>
            <person name="Liou S.-R."/>
            <person name="Plunkett G. III"/>
            <person name="Mayhew G.F."/>
            <person name="Rose D.J."/>
            <person name="Burland V."/>
            <person name="Kodoyianni V."/>
            <person name="Schwartz D.C."/>
            <person name="Blattner F.R."/>
        </authorList>
    </citation>
    <scope>NUCLEOTIDE SEQUENCE [LARGE SCALE GENOMIC DNA]</scope>
    <source>
        <strain>ATCC 700931 / Ty2</strain>
    </source>
</reference>
<feature type="chain" id="PRO_0000193071" description="Crotonobetaine/carnitine--CoA ligase">
    <location>
        <begin position="1"/>
        <end position="517"/>
    </location>
</feature>
<proteinExistence type="inferred from homology"/>
<evidence type="ECO:0000255" key="1">
    <source>
        <dbReference type="HAMAP-Rule" id="MF_01524"/>
    </source>
</evidence>
<sequence length="517" mass="58510">MDIVGGQNLRQMWDDLAGMYGDKTALIFESCEGIVRQFSYASLNEEINRTANLFYYLGIRKGDRVALHLDNCPEFIFCWFGLAKIGAIMVPINARLLGEESAWILQNSQVSLLVTSAQFYPMYREIRQDNSTPLNHICLIGEQLPADDGVSHFSQLQARQSATLCYTPALSTDDTAEILFTSGTTSRPKGVVITHYNLRFAGYYSAWQIALRDDDVYMTVMPAFHIDCQCTAAMPAFSAGSTFVLLEKYSARAFWDQVRKYQATVTECIPMMIRTLMVQPATPTDRQHHLREVMFYLNLSAQEKDAFTERFGVRLLTSYGMTETIVGIIGDRPGDKRRWPSIGRVGFSYEAEIRDDQNRPLPAGEIGEICIKGIPGKTIFKEYYMQPEATARALEPEGWLHTGDSGYQDEDGYFYFVDRRCNMIKRGGENVSCVELENIISAHPKIQDIVVVGIKDAIRDEAIKAFIVLNEGETLSEAEFFSFCENNMAKFKVPSFMEIRTDLPRNCSGKIIKKNLK</sequence>
<accession>Q8Z9L4</accession>
<comment type="function">
    <text evidence="1">Catalyzes the transfer of CoA to carnitine, generating the initial carnitinyl-CoA needed for the CaiB reaction cycle. Also has activity toward crotonobetaine and gamma-butyrobetaine.</text>
</comment>
<comment type="catalytic activity">
    <reaction evidence="1">
        <text>4-(trimethylamino)butanoate + ATP + CoA = 4-(trimethylamino)butanoyl-CoA + AMP + diphosphate</text>
        <dbReference type="Rhea" id="RHEA:55960"/>
        <dbReference type="ChEBI" id="CHEBI:16244"/>
        <dbReference type="ChEBI" id="CHEBI:30616"/>
        <dbReference type="ChEBI" id="CHEBI:33019"/>
        <dbReference type="ChEBI" id="CHEBI:57287"/>
        <dbReference type="ChEBI" id="CHEBI:61513"/>
        <dbReference type="ChEBI" id="CHEBI:456215"/>
        <dbReference type="EC" id="6.2.1.48"/>
    </reaction>
</comment>
<comment type="catalytic activity">
    <reaction evidence="1">
        <text>crotonobetaine + ATP + CoA = crotonobetainyl-CoA + AMP + diphosphate</text>
        <dbReference type="Rhea" id="RHEA:30079"/>
        <dbReference type="ChEBI" id="CHEBI:17237"/>
        <dbReference type="ChEBI" id="CHEBI:30616"/>
        <dbReference type="ChEBI" id="CHEBI:33019"/>
        <dbReference type="ChEBI" id="CHEBI:57287"/>
        <dbReference type="ChEBI" id="CHEBI:60933"/>
        <dbReference type="ChEBI" id="CHEBI:456215"/>
        <dbReference type="EC" id="6.2.1.48"/>
    </reaction>
</comment>
<comment type="catalytic activity">
    <reaction evidence="1">
        <text>(R)-carnitine + ATP + CoA = (R)-carnitinyl-CoA + AMP + diphosphate</text>
        <dbReference type="Rhea" id="RHEA:28514"/>
        <dbReference type="ChEBI" id="CHEBI:16347"/>
        <dbReference type="ChEBI" id="CHEBI:30616"/>
        <dbReference type="ChEBI" id="CHEBI:33019"/>
        <dbReference type="ChEBI" id="CHEBI:57287"/>
        <dbReference type="ChEBI" id="CHEBI:60932"/>
        <dbReference type="ChEBI" id="CHEBI:456215"/>
        <dbReference type="EC" id="6.2.1.48"/>
    </reaction>
</comment>
<comment type="pathway">
    <text evidence="1">Amine and polyamine metabolism; carnitine metabolism.</text>
</comment>
<comment type="similarity">
    <text evidence="1">Belongs to the ATP-dependent AMP-binding enzyme family.</text>
</comment>